<keyword id="KW-0012">Acyltransferase</keyword>
<keyword id="KW-0028">Amino-acid biosynthesis</keyword>
<keyword id="KW-0055">Arginine biosynthesis</keyword>
<keyword id="KW-0068">Autocatalytic cleavage</keyword>
<keyword id="KW-0963">Cytoplasm</keyword>
<keyword id="KW-0511">Multifunctional enzyme</keyword>
<keyword id="KW-0808">Transferase</keyword>
<name>ARGJ_THEFY</name>
<dbReference type="EC" id="2.3.1.35" evidence="1"/>
<dbReference type="EC" id="2.3.1.1" evidence="1"/>
<dbReference type="EMBL" id="CP000088">
    <property type="protein sequence ID" value="AAZ56089.1"/>
    <property type="molecule type" value="Genomic_DNA"/>
</dbReference>
<dbReference type="RefSeq" id="WP_011292479.1">
    <property type="nucleotide sequence ID" value="NC_007333.1"/>
</dbReference>
<dbReference type="SMR" id="Q47N80"/>
<dbReference type="STRING" id="269800.Tfu_2056"/>
<dbReference type="KEGG" id="tfu:Tfu_2056"/>
<dbReference type="eggNOG" id="COG1364">
    <property type="taxonomic scope" value="Bacteria"/>
</dbReference>
<dbReference type="HOGENOM" id="CLU_027172_2_0_11"/>
<dbReference type="OrthoDB" id="9804242at2"/>
<dbReference type="UniPathway" id="UPA00068">
    <property type="reaction ID" value="UER00106"/>
</dbReference>
<dbReference type="UniPathway" id="UPA00068">
    <property type="reaction ID" value="UER00111"/>
</dbReference>
<dbReference type="GO" id="GO:0005737">
    <property type="term" value="C:cytoplasm"/>
    <property type="evidence" value="ECO:0007669"/>
    <property type="project" value="UniProtKB-SubCell"/>
</dbReference>
<dbReference type="GO" id="GO:0004358">
    <property type="term" value="F:glutamate N-acetyltransferase activity"/>
    <property type="evidence" value="ECO:0007669"/>
    <property type="project" value="UniProtKB-UniRule"/>
</dbReference>
<dbReference type="GO" id="GO:0004042">
    <property type="term" value="F:L-glutamate N-acetyltransferase activity"/>
    <property type="evidence" value="ECO:0007669"/>
    <property type="project" value="UniProtKB-UniRule"/>
</dbReference>
<dbReference type="GO" id="GO:0006526">
    <property type="term" value="P:L-arginine biosynthetic process"/>
    <property type="evidence" value="ECO:0007669"/>
    <property type="project" value="UniProtKB-UniRule"/>
</dbReference>
<dbReference type="GO" id="GO:0006592">
    <property type="term" value="P:ornithine biosynthetic process"/>
    <property type="evidence" value="ECO:0007669"/>
    <property type="project" value="TreeGrafter"/>
</dbReference>
<dbReference type="CDD" id="cd02152">
    <property type="entry name" value="OAT"/>
    <property type="match status" value="1"/>
</dbReference>
<dbReference type="FunFam" id="3.10.20.340:FF:000003">
    <property type="entry name" value="Arginine biosynthesis bifunctional protein ArgJ"/>
    <property type="match status" value="1"/>
</dbReference>
<dbReference type="Gene3D" id="3.10.20.340">
    <property type="entry name" value="ArgJ beta chain, C-terminal domain"/>
    <property type="match status" value="1"/>
</dbReference>
<dbReference type="Gene3D" id="3.60.70.12">
    <property type="entry name" value="L-amino peptidase D-ALA esterase/amidase"/>
    <property type="match status" value="1"/>
</dbReference>
<dbReference type="HAMAP" id="MF_01106">
    <property type="entry name" value="ArgJ"/>
    <property type="match status" value="1"/>
</dbReference>
<dbReference type="InterPro" id="IPR002813">
    <property type="entry name" value="Arg_biosynth_ArgJ"/>
</dbReference>
<dbReference type="InterPro" id="IPR016117">
    <property type="entry name" value="ArgJ-like_dom_sf"/>
</dbReference>
<dbReference type="InterPro" id="IPR042195">
    <property type="entry name" value="ArgJ_beta_C"/>
</dbReference>
<dbReference type="NCBIfam" id="TIGR00120">
    <property type="entry name" value="ArgJ"/>
    <property type="match status" value="1"/>
</dbReference>
<dbReference type="NCBIfam" id="NF003802">
    <property type="entry name" value="PRK05388.1"/>
    <property type="match status" value="1"/>
</dbReference>
<dbReference type="PANTHER" id="PTHR23100">
    <property type="entry name" value="ARGININE BIOSYNTHESIS BIFUNCTIONAL PROTEIN ARGJ"/>
    <property type="match status" value="1"/>
</dbReference>
<dbReference type="PANTHER" id="PTHR23100:SF0">
    <property type="entry name" value="ARGININE BIOSYNTHESIS BIFUNCTIONAL PROTEIN ARGJ, MITOCHONDRIAL"/>
    <property type="match status" value="1"/>
</dbReference>
<dbReference type="Pfam" id="PF01960">
    <property type="entry name" value="ArgJ"/>
    <property type="match status" value="1"/>
</dbReference>
<dbReference type="SUPFAM" id="SSF56266">
    <property type="entry name" value="DmpA/ArgJ-like"/>
    <property type="match status" value="1"/>
</dbReference>
<gene>
    <name evidence="1" type="primary">argJ</name>
    <name type="ordered locus">Tfu_2056</name>
</gene>
<feature type="chain" id="PRO_0000227268" description="Arginine biosynthesis bifunctional protein ArgJ alpha chain" evidence="1">
    <location>
        <begin position="1"/>
        <end position="178"/>
    </location>
</feature>
<feature type="chain" id="PRO_0000227269" description="Arginine biosynthesis bifunctional protein ArgJ beta chain" evidence="1">
    <location>
        <begin position="179"/>
        <end position="383"/>
    </location>
</feature>
<feature type="active site" description="Nucleophile" evidence="1">
    <location>
        <position position="179"/>
    </location>
</feature>
<feature type="binding site" evidence="1">
    <location>
        <position position="146"/>
    </location>
    <ligand>
        <name>substrate</name>
    </ligand>
</feature>
<feature type="binding site" evidence="1">
    <location>
        <position position="168"/>
    </location>
    <ligand>
        <name>substrate</name>
    </ligand>
</feature>
<feature type="binding site" evidence="1">
    <location>
        <position position="179"/>
    </location>
    <ligand>
        <name>substrate</name>
    </ligand>
</feature>
<feature type="binding site" evidence="1">
    <location>
        <position position="259"/>
    </location>
    <ligand>
        <name>substrate</name>
    </ligand>
</feature>
<feature type="binding site" evidence="1">
    <location>
        <position position="378"/>
    </location>
    <ligand>
        <name>substrate</name>
    </ligand>
</feature>
<feature type="binding site" evidence="1">
    <location>
        <position position="383"/>
    </location>
    <ligand>
        <name>substrate</name>
    </ligand>
</feature>
<feature type="site" description="Involved in the stabilization of negative charge on the oxyanion by the formation of the oxyanion hole" evidence="1">
    <location>
        <position position="109"/>
    </location>
</feature>
<feature type="site" description="Involved in the stabilization of negative charge on the oxyanion by the formation of the oxyanion hole" evidence="1">
    <location>
        <position position="110"/>
    </location>
</feature>
<feature type="site" description="Cleavage; by autolysis" evidence="1">
    <location>
        <begin position="178"/>
        <end position="179"/>
    </location>
</feature>
<reference key="1">
    <citation type="journal article" date="2007" name="J. Bacteriol.">
        <title>Genome sequence and analysis of the soil cellulolytic actinomycete Thermobifida fusca YX.</title>
        <authorList>
            <person name="Lykidis A."/>
            <person name="Mavromatis K."/>
            <person name="Ivanova N."/>
            <person name="Anderson I."/>
            <person name="Land M."/>
            <person name="DiBartolo G."/>
            <person name="Martinez M."/>
            <person name="Lapidus A."/>
            <person name="Lucas S."/>
            <person name="Copeland A."/>
            <person name="Richardson P."/>
            <person name="Wilson D.B."/>
            <person name="Kyrpides N."/>
        </authorList>
    </citation>
    <scope>NUCLEOTIDE SEQUENCE [LARGE SCALE GENOMIC DNA]</scope>
    <source>
        <strain>YX</strain>
    </source>
</reference>
<proteinExistence type="inferred from homology"/>
<comment type="function">
    <text evidence="1">Catalyzes two activities which are involved in the cyclic version of arginine biosynthesis: the synthesis of N-acetylglutamate from glutamate and acetyl-CoA as the acetyl donor, and of ornithine by transacetylation between N(2)-acetylornithine and glutamate.</text>
</comment>
<comment type="catalytic activity">
    <reaction evidence="1">
        <text>N(2)-acetyl-L-ornithine + L-glutamate = N-acetyl-L-glutamate + L-ornithine</text>
        <dbReference type="Rhea" id="RHEA:15349"/>
        <dbReference type="ChEBI" id="CHEBI:29985"/>
        <dbReference type="ChEBI" id="CHEBI:44337"/>
        <dbReference type="ChEBI" id="CHEBI:46911"/>
        <dbReference type="ChEBI" id="CHEBI:57805"/>
        <dbReference type="EC" id="2.3.1.35"/>
    </reaction>
</comment>
<comment type="catalytic activity">
    <reaction evidence="1">
        <text>L-glutamate + acetyl-CoA = N-acetyl-L-glutamate + CoA + H(+)</text>
        <dbReference type="Rhea" id="RHEA:24292"/>
        <dbReference type="ChEBI" id="CHEBI:15378"/>
        <dbReference type="ChEBI" id="CHEBI:29985"/>
        <dbReference type="ChEBI" id="CHEBI:44337"/>
        <dbReference type="ChEBI" id="CHEBI:57287"/>
        <dbReference type="ChEBI" id="CHEBI:57288"/>
        <dbReference type="EC" id="2.3.1.1"/>
    </reaction>
</comment>
<comment type="pathway">
    <text evidence="1">Amino-acid biosynthesis; L-arginine biosynthesis; L-ornithine and N-acetyl-L-glutamate from L-glutamate and N(2)-acetyl-L-ornithine (cyclic): step 1/1.</text>
</comment>
<comment type="pathway">
    <text evidence="1">Amino-acid biosynthesis; L-arginine biosynthesis; N(2)-acetyl-L-ornithine from L-glutamate: step 1/4.</text>
</comment>
<comment type="subunit">
    <text evidence="1">Heterotetramer of two alpha and two beta chains.</text>
</comment>
<comment type="subcellular location">
    <subcellularLocation>
        <location evidence="1">Cytoplasm</location>
    </subcellularLocation>
</comment>
<comment type="similarity">
    <text evidence="1">Belongs to the ArgJ family.</text>
</comment>
<accession>Q47N80</accession>
<protein>
    <recommendedName>
        <fullName evidence="1">Arginine biosynthesis bifunctional protein ArgJ</fullName>
    </recommendedName>
    <domain>
        <recommendedName>
            <fullName evidence="1">Glutamate N-acetyltransferase</fullName>
            <ecNumber evidence="1">2.3.1.35</ecNumber>
        </recommendedName>
        <alternativeName>
            <fullName evidence="1">Ornithine acetyltransferase</fullName>
            <shortName evidence="1">OATase</shortName>
        </alternativeName>
        <alternativeName>
            <fullName evidence="1">Ornithine transacetylase</fullName>
        </alternativeName>
    </domain>
    <domain>
        <recommendedName>
            <fullName evidence="1">Amino-acid acetyltransferase</fullName>
            <ecNumber evidence="1">2.3.1.1</ecNumber>
        </recommendedName>
        <alternativeName>
            <fullName evidence="1">N-acetylglutamate synthase</fullName>
            <shortName evidence="1">AGSase</shortName>
        </alternativeName>
    </domain>
    <component>
        <recommendedName>
            <fullName evidence="1">Arginine biosynthesis bifunctional protein ArgJ alpha chain</fullName>
        </recommendedName>
    </component>
    <component>
        <recommendedName>
            <fullName evidence="1">Arginine biosynthesis bifunctional protein ArgJ beta chain</fullName>
        </recommendedName>
    </component>
</protein>
<organism>
    <name type="scientific">Thermobifida fusca (strain YX)</name>
    <dbReference type="NCBI Taxonomy" id="269800"/>
    <lineage>
        <taxon>Bacteria</taxon>
        <taxon>Bacillati</taxon>
        <taxon>Actinomycetota</taxon>
        <taxon>Actinomycetes</taxon>
        <taxon>Streptosporangiales</taxon>
        <taxon>Nocardiopsidaceae</taxon>
        <taxon>Thermobifida</taxon>
    </lineage>
</organism>
<sequence>MSVTAPLGFRAAGVAAGIKDGGQRDVAVVINDGPHHSAAAVFTKNRVKAAPVQWSQQAVADGQVRAVVLNSGGANACTGAAGFQDARTTAEHLAAALNDSADRIVVCSTGLIGERLPMPKLLAGVDAAVAEAARDGGLNAADAIRTTDTVSKIAFRRGSGYTIGGMAKGAGMLAPSLATMLSVLTTDAVLTPEQCTALLRAATEVTFDRLDTDGCTSTNDTVVLMASGASGTTPDEAEFSRLLTEVCQDLCRQLLADAEGATKAIAIEVVGAASTDDAVTVGRAIARNALFKCAIYGEDPNWGRVLAAVGTTDAVFEPDNINVAINGVWVCRGGSVGDDRAKVNLKPRDVTVTVDLSAGSASATVWTTDLTVDYVHENSAYST</sequence>
<evidence type="ECO:0000255" key="1">
    <source>
        <dbReference type="HAMAP-Rule" id="MF_01106"/>
    </source>
</evidence>